<dbReference type="EMBL" id="CP000627">
    <property type="protein sequence ID" value="ABQ20603.1"/>
    <property type="molecule type" value="Genomic_DNA"/>
</dbReference>
<dbReference type="EMBL" id="CP001235">
    <property type="protein sequence ID" value="ACP10688.1"/>
    <property type="molecule type" value="Genomic_DNA"/>
</dbReference>
<dbReference type="RefSeq" id="WP_000941219.1">
    <property type="nucleotide sequence ID" value="NZ_JAACZH010000007.1"/>
</dbReference>
<dbReference type="SMR" id="A5F542"/>
<dbReference type="GeneID" id="69718807"/>
<dbReference type="KEGG" id="vco:VC0395_A2167"/>
<dbReference type="KEGG" id="vcr:VC395_2702"/>
<dbReference type="PATRIC" id="fig|345073.21.peg.2602"/>
<dbReference type="eggNOG" id="COG0197">
    <property type="taxonomic scope" value="Bacteria"/>
</dbReference>
<dbReference type="HOGENOM" id="CLU_078858_2_1_6"/>
<dbReference type="OrthoDB" id="9802589at2"/>
<dbReference type="Proteomes" id="UP000000249">
    <property type="component" value="Chromosome 2"/>
</dbReference>
<dbReference type="GO" id="GO:0022625">
    <property type="term" value="C:cytosolic large ribosomal subunit"/>
    <property type="evidence" value="ECO:0007669"/>
    <property type="project" value="TreeGrafter"/>
</dbReference>
<dbReference type="GO" id="GO:0019843">
    <property type="term" value="F:rRNA binding"/>
    <property type="evidence" value="ECO:0007669"/>
    <property type="project" value="UniProtKB-UniRule"/>
</dbReference>
<dbReference type="GO" id="GO:0003735">
    <property type="term" value="F:structural constituent of ribosome"/>
    <property type="evidence" value="ECO:0007669"/>
    <property type="project" value="InterPro"/>
</dbReference>
<dbReference type="GO" id="GO:0000049">
    <property type="term" value="F:tRNA binding"/>
    <property type="evidence" value="ECO:0007669"/>
    <property type="project" value="UniProtKB-KW"/>
</dbReference>
<dbReference type="GO" id="GO:0006412">
    <property type="term" value="P:translation"/>
    <property type="evidence" value="ECO:0007669"/>
    <property type="project" value="UniProtKB-UniRule"/>
</dbReference>
<dbReference type="CDD" id="cd01433">
    <property type="entry name" value="Ribosomal_L16_L10e"/>
    <property type="match status" value="1"/>
</dbReference>
<dbReference type="FunFam" id="3.90.1170.10:FF:000001">
    <property type="entry name" value="50S ribosomal protein L16"/>
    <property type="match status" value="1"/>
</dbReference>
<dbReference type="Gene3D" id="3.90.1170.10">
    <property type="entry name" value="Ribosomal protein L10e/L16"/>
    <property type="match status" value="1"/>
</dbReference>
<dbReference type="HAMAP" id="MF_01342">
    <property type="entry name" value="Ribosomal_uL16"/>
    <property type="match status" value="1"/>
</dbReference>
<dbReference type="InterPro" id="IPR047873">
    <property type="entry name" value="Ribosomal_uL16"/>
</dbReference>
<dbReference type="InterPro" id="IPR000114">
    <property type="entry name" value="Ribosomal_uL16_bact-type"/>
</dbReference>
<dbReference type="InterPro" id="IPR020798">
    <property type="entry name" value="Ribosomal_uL16_CS"/>
</dbReference>
<dbReference type="InterPro" id="IPR016180">
    <property type="entry name" value="Ribosomal_uL16_dom"/>
</dbReference>
<dbReference type="InterPro" id="IPR036920">
    <property type="entry name" value="Ribosomal_uL16_sf"/>
</dbReference>
<dbReference type="NCBIfam" id="TIGR01164">
    <property type="entry name" value="rplP_bact"/>
    <property type="match status" value="1"/>
</dbReference>
<dbReference type="PANTHER" id="PTHR12220">
    <property type="entry name" value="50S/60S RIBOSOMAL PROTEIN L16"/>
    <property type="match status" value="1"/>
</dbReference>
<dbReference type="PANTHER" id="PTHR12220:SF13">
    <property type="entry name" value="LARGE RIBOSOMAL SUBUNIT PROTEIN UL16M"/>
    <property type="match status" value="1"/>
</dbReference>
<dbReference type="Pfam" id="PF00252">
    <property type="entry name" value="Ribosomal_L16"/>
    <property type="match status" value="1"/>
</dbReference>
<dbReference type="PRINTS" id="PR00060">
    <property type="entry name" value="RIBOSOMALL16"/>
</dbReference>
<dbReference type="SUPFAM" id="SSF54686">
    <property type="entry name" value="Ribosomal protein L16p/L10e"/>
    <property type="match status" value="1"/>
</dbReference>
<dbReference type="PROSITE" id="PS00586">
    <property type="entry name" value="RIBOSOMAL_L16_1"/>
    <property type="match status" value="1"/>
</dbReference>
<sequence length="136" mass="15551">MLQPKRTKFRKVQTGRNRGLAKGTEVSFGTFGLKAVGRGRLTARQIEAARRAMTRHIKRQGKIWIRVFPDKPITEKPLEVRQGKGKGNVEYWVAQIQPGKVMYEVDGVPEELAREAFRLAARKLPFKTTFVTKQVM</sequence>
<proteinExistence type="inferred from homology"/>
<feature type="chain" id="PRO_1000073331" description="Large ribosomal subunit protein uL16">
    <location>
        <begin position="1"/>
        <end position="136"/>
    </location>
</feature>
<evidence type="ECO:0000255" key="1">
    <source>
        <dbReference type="HAMAP-Rule" id="MF_01342"/>
    </source>
</evidence>
<evidence type="ECO:0000305" key="2"/>
<gene>
    <name evidence="1" type="primary">rplP</name>
    <name type="ordered locus">VC0395_A2167</name>
    <name type="ordered locus">VC395_2702</name>
</gene>
<name>RL16_VIBC3</name>
<reference key="1">
    <citation type="submission" date="2007-03" db="EMBL/GenBank/DDBJ databases">
        <authorList>
            <person name="Heidelberg J."/>
        </authorList>
    </citation>
    <scope>NUCLEOTIDE SEQUENCE [LARGE SCALE GENOMIC DNA]</scope>
    <source>
        <strain>ATCC 39541 / Classical Ogawa 395 / O395</strain>
    </source>
</reference>
<reference key="2">
    <citation type="journal article" date="2008" name="PLoS ONE">
        <title>A recalibrated molecular clock and independent origins for the cholera pandemic clones.</title>
        <authorList>
            <person name="Feng L."/>
            <person name="Reeves P.R."/>
            <person name="Lan R."/>
            <person name="Ren Y."/>
            <person name="Gao C."/>
            <person name="Zhou Z."/>
            <person name="Ren Y."/>
            <person name="Cheng J."/>
            <person name="Wang W."/>
            <person name="Wang J."/>
            <person name="Qian W."/>
            <person name="Li D."/>
            <person name="Wang L."/>
        </authorList>
    </citation>
    <scope>NUCLEOTIDE SEQUENCE [LARGE SCALE GENOMIC DNA]</scope>
    <source>
        <strain>ATCC 39541 / Classical Ogawa 395 / O395</strain>
    </source>
</reference>
<protein>
    <recommendedName>
        <fullName evidence="1">Large ribosomal subunit protein uL16</fullName>
    </recommendedName>
    <alternativeName>
        <fullName evidence="2">50S ribosomal protein L16</fullName>
    </alternativeName>
</protein>
<keyword id="KW-0687">Ribonucleoprotein</keyword>
<keyword id="KW-0689">Ribosomal protein</keyword>
<keyword id="KW-0694">RNA-binding</keyword>
<keyword id="KW-0699">rRNA-binding</keyword>
<keyword id="KW-0820">tRNA-binding</keyword>
<accession>A5F542</accession>
<accession>C3LXI8</accession>
<comment type="function">
    <text evidence="1">Binds 23S rRNA and is also seen to make contacts with the A and possibly P site tRNAs.</text>
</comment>
<comment type="subunit">
    <text evidence="1">Part of the 50S ribosomal subunit.</text>
</comment>
<comment type="similarity">
    <text evidence="1">Belongs to the universal ribosomal protein uL16 family.</text>
</comment>
<organism>
    <name type="scientific">Vibrio cholerae serotype O1 (strain ATCC 39541 / Classical Ogawa 395 / O395)</name>
    <dbReference type="NCBI Taxonomy" id="345073"/>
    <lineage>
        <taxon>Bacteria</taxon>
        <taxon>Pseudomonadati</taxon>
        <taxon>Pseudomonadota</taxon>
        <taxon>Gammaproteobacteria</taxon>
        <taxon>Vibrionales</taxon>
        <taxon>Vibrionaceae</taxon>
        <taxon>Vibrio</taxon>
    </lineage>
</organism>